<evidence type="ECO:0000250" key="1"/>
<evidence type="ECO:0000256" key="2">
    <source>
        <dbReference type="SAM" id="MobiDB-lite"/>
    </source>
</evidence>
<evidence type="ECO:0000305" key="3"/>
<gene>
    <name type="primary">Amer3</name>
    <name type="synonym">Fam123c</name>
</gene>
<sequence length="780" mass="83159">MELRRGKTFIKSSVQISHEKLIDSPAKEDPDKWPLSLGEQQRAYGEKSSQTSPCSQGYGRCPNKEVLSDPEGGPVPLCGTTFKLVRKSKTHDSVPGAVKAAAPTGQMVGSTSFSETPGGQRMIDYRHFVPQMPFVPAVAKSIPRKRISLKRSKKCFRNLFHMRRSKTENLASLSAKGKNLSPSGVPAQQGTAFLSMGEGLGLDSLCQDLSDSEFLHDSPFDLCSALCEDVASLKSFDSLTGCGEIFADGSSVPSVELKDGPESPAHSPQALDCKTPCGPAQGGMEQLMSPAQNEASDFNKFWDSVNRSVQQQQRALMGPWLTSPEGTETDQTRLDTSGLAELPLFPCRGPPSGSKASSIDTGTPKSEQPESVSTSDEGYYDSFSPGLEEEKKEAASPGTPAATFPRDSYSGDALYELFYDPSEAPVGPILDDDCVSESLSGPALGTPLSMCSFRVGAEENLAPAPGPDLLSQGFLQSTWKGKECLLKLCDTELAITMGIVNWLRRTPPATSPTPASTPAPTPALVLREPAAPPDPHRVLRGASVGVKGREDQATTCFPPSRQEPWAHSGTKNLLVRECEVLGEPARGSKTPSKDDSLEEGTQDFSEGQSSSEATMTSISGNNKAVTSATCLSSQKELGTPGNLRYSQGPLRPGHRGSALDPGPMLVGCVTHVAALQIYPDSNSPRQDKGNGLFWKPQAWGPNILQKNPISSKPNEAAGCGLSSSASPQDQKCRDLFLDLNQLKLEPSRLGPQACSSVDSQPQQLCPRAPEQVPHRGSVGS</sequence>
<comment type="function">
    <text evidence="1">Regulator of the canonical Wnt signaling pathway. Acts by specifically binding phosphatidylinositol 4,5-bisphosphate (PtdIns(4,5)P2), translocating to the cell membrane (By similarity).</text>
</comment>
<comment type="subcellular location">
    <subcellularLocation>
        <location evidence="1">Cell membrane</location>
        <topology evidence="1">Peripheral membrane protein</topology>
    </subcellularLocation>
    <text evidence="1">Translocates to the cell membrane following binding to PtdIns(4,5)P2.</text>
</comment>
<comment type="similarity">
    <text evidence="3">Belongs to the Amer family.</text>
</comment>
<proteinExistence type="evidence at transcript level"/>
<name>AMER3_MOUSE</name>
<feature type="chain" id="PRO_0000320595" description="APC membrane recruitment protein 3">
    <location>
        <begin position="1"/>
        <end position="780"/>
    </location>
</feature>
<feature type="region of interest" description="Disordered" evidence="2">
    <location>
        <begin position="20"/>
        <end position="59"/>
    </location>
</feature>
<feature type="region of interest" description="Disordered" evidence="2">
    <location>
        <begin position="341"/>
        <end position="407"/>
    </location>
</feature>
<feature type="region of interest" description="Disordered" evidence="2">
    <location>
        <begin position="547"/>
        <end position="569"/>
    </location>
</feature>
<feature type="region of interest" description="Disordered" evidence="2">
    <location>
        <begin position="582"/>
        <end position="617"/>
    </location>
</feature>
<feature type="region of interest" description="Disordered" evidence="2">
    <location>
        <begin position="635"/>
        <end position="659"/>
    </location>
</feature>
<feature type="region of interest" description="Disordered" evidence="2">
    <location>
        <begin position="706"/>
        <end position="729"/>
    </location>
</feature>
<feature type="region of interest" description="Disordered" evidence="2">
    <location>
        <begin position="749"/>
        <end position="780"/>
    </location>
</feature>
<feature type="compositionally biased region" description="Basic and acidic residues" evidence="2">
    <location>
        <begin position="20"/>
        <end position="32"/>
    </location>
</feature>
<feature type="compositionally biased region" description="Polar residues" evidence="2">
    <location>
        <begin position="354"/>
        <end position="376"/>
    </location>
</feature>
<feature type="compositionally biased region" description="Polar residues" evidence="2">
    <location>
        <begin position="602"/>
        <end position="617"/>
    </location>
</feature>
<feature type="compositionally biased region" description="Polar residues" evidence="2">
    <location>
        <begin position="753"/>
        <end position="763"/>
    </location>
</feature>
<protein>
    <recommendedName>
        <fullName>APC membrane recruitment protein 3</fullName>
        <shortName>Amer3</shortName>
    </recommendedName>
    <alternativeName>
        <fullName>Protein FAM123C</fullName>
    </alternativeName>
</protein>
<organism>
    <name type="scientific">Mus musculus</name>
    <name type="common">Mouse</name>
    <dbReference type="NCBI Taxonomy" id="10090"/>
    <lineage>
        <taxon>Eukaryota</taxon>
        <taxon>Metazoa</taxon>
        <taxon>Chordata</taxon>
        <taxon>Craniata</taxon>
        <taxon>Vertebrata</taxon>
        <taxon>Euteleostomi</taxon>
        <taxon>Mammalia</taxon>
        <taxon>Eutheria</taxon>
        <taxon>Euarchontoglires</taxon>
        <taxon>Glires</taxon>
        <taxon>Rodentia</taxon>
        <taxon>Myomorpha</taxon>
        <taxon>Muroidea</taxon>
        <taxon>Muridae</taxon>
        <taxon>Murinae</taxon>
        <taxon>Mus</taxon>
        <taxon>Mus</taxon>
    </lineage>
</organism>
<accession>Q6NS69</accession>
<accession>Q8BS82</accession>
<dbReference type="EMBL" id="BC070435">
    <property type="protein sequence ID" value="AAH70435.1"/>
    <property type="molecule type" value="mRNA"/>
</dbReference>
<dbReference type="EMBL" id="AK034979">
    <property type="protein sequence ID" value="BAC28901.1"/>
    <property type="molecule type" value="mRNA"/>
</dbReference>
<dbReference type="CCDS" id="CCDS14871.1"/>
<dbReference type="RefSeq" id="NP_998892.1">
    <property type="nucleotide sequence ID" value="NM_213727.2"/>
</dbReference>
<dbReference type="RefSeq" id="XP_006495883.1">
    <property type="nucleotide sequence ID" value="XM_006495820.3"/>
</dbReference>
<dbReference type="RefSeq" id="XP_006495884.1">
    <property type="nucleotide sequence ID" value="XM_006495821.5"/>
</dbReference>
<dbReference type="BioGRID" id="229228">
    <property type="interactions" value="2"/>
</dbReference>
<dbReference type="FunCoup" id="Q6NS69">
    <property type="interactions" value="747"/>
</dbReference>
<dbReference type="STRING" id="10090.ENSMUSP00000054748"/>
<dbReference type="GlyGen" id="Q6NS69">
    <property type="glycosylation" value="4 sites"/>
</dbReference>
<dbReference type="iPTMnet" id="Q6NS69"/>
<dbReference type="PhosphoSitePlus" id="Q6NS69"/>
<dbReference type="SwissPalm" id="Q6NS69"/>
<dbReference type="PaxDb" id="10090-ENSMUSP00000054748"/>
<dbReference type="ProteomicsDB" id="296349"/>
<dbReference type="Antibodypedia" id="50181">
    <property type="antibodies" value="14 antibodies from 7 providers"/>
</dbReference>
<dbReference type="Ensembl" id="ENSMUST00000052670.11">
    <property type="protein sequence ID" value="ENSMUSP00000054748.9"/>
    <property type="gene ID" value="ENSMUSG00000045174.11"/>
</dbReference>
<dbReference type="GeneID" id="211383"/>
<dbReference type="KEGG" id="mmu:211383"/>
<dbReference type="UCSC" id="uc011wjc.1">
    <property type="organism name" value="mouse"/>
</dbReference>
<dbReference type="AGR" id="MGI:3026939"/>
<dbReference type="CTD" id="205147"/>
<dbReference type="MGI" id="MGI:3026939">
    <property type="gene designation" value="Amer3"/>
</dbReference>
<dbReference type="VEuPathDB" id="HostDB:ENSMUSG00000045174"/>
<dbReference type="eggNOG" id="ENOG502QVAK">
    <property type="taxonomic scope" value="Eukaryota"/>
</dbReference>
<dbReference type="GeneTree" id="ENSGT00530000063529"/>
<dbReference type="HOGENOM" id="CLU_011805_0_0_1"/>
<dbReference type="InParanoid" id="Q6NS69"/>
<dbReference type="OMA" id="GAPLSMC"/>
<dbReference type="OrthoDB" id="9412224at2759"/>
<dbReference type="PhylomeDB" id="Q6NS69"/>
<dbReference type="TreeFam" id="TF333006"/>
<dbReference type="BioGRID-ORCS" id="211383">
    <property type="hits" value="1 hit in 77 CRISPR screens"/>
</dbReference>
<dbReference type="ChiTaRS" id="Amer3">
    <property type="organism name" value="mouse"/>
</dbReference>
<dbReference type="PRO" id="PR:Q6NS69"/>
<dbReference type="Proteomes" id="UP000000589">
    <property type="component" value="Chromosome 1"/>
</dbReference>
<dbReference type="RNAct" id="Q6NS69">
    <property type="molecule type" value="protein"/>
</dbReference>
<dbReference type="Bgee" id="ENSMUSG00000045174">
    <property type="expression patterns" value="Expressed in neural tube marginal layer and 109 other cell types or tissues"/>
</dbReference>
<dbReference type="GO" id="GO:0005886">
    <property type="term" value="C:plasma membrane"/>
    <property type="evidence" value="ECO:0007669"/>
    <property type="project" value="UniProtKB-SubCell"/>
</dbReference>
<dbReference type="GO" id="GO:0008289">
    <property type="term" value="F:lipid binding"/>
    <property type="evidence" value="ECO:0007669"/>
    <property type="project" value="UniProtKB-KW"/>
</dbReference>
<dbReference type="GO" id="GO:0016055">
    <property type="term" value="P:Wnt signaling pathway"/>
    <property type="evidence" value="ECO:0007669"/>
    <property type="project" value="UniProtKB-KW"/>
</dbReference>
<dbReference type="InterPro" id="IPR019003">
    <property type="entry name" value="AMER"/>
</dbReference>
<dbReference type="PANTHER" id="PTHR22237">
    <property type="entry name" value="APC MEMBRANE RECRUITMENT PROTEIN 2-RELATED"/>
    <property type="match status" value="1"/>
</dbReference>
<dbReference type="PANTHER" id="PTHR22237:SF2">
    <property type="entry name" value="APC MEMBRANE RECRUITMENT PROTEIN 3"/>
    <property type="match status" value="1"/>
</dbReference>
<dbReference type="Pfam" id="PF09422">
    <property type="entry name" value="AMER"/>
    <property type="match status" value="2"/>
</dbReference>
<reference key="1">
    <citation type="journal article" date="2004" name="Genome Res.">
        <title>The status, quality, and expansion of the NIH full-length cDNA project: the Mammalian Gene Collection (MGC).</title>
        <authorList>
            <consortium name="The MGC Project Team"/>
        </authorList>
    </citation>
    <scope>NUCLEOTIDE SEQUENCE [LARGE SCALE MRNA]</scope>
    <source>
        <strain>C57BL/6J</strain>
        <tissue>Brain</tissue>
    </source>
</reference>
<reference key="2">
    <citation type="journal article" date="2005" name="Science">
        <title>The transcriptional landscape of the mammalian genome.</title>
        <authorList>
            <person name="Carninci P."/>
            <person name="Kasukawa T."/>
            <person name="Katayama S."/>
            <person name="Gough J."/>
            <person name="Frith M.C."/>
            <person name="Maeda N."/>
            <person name="Oyama R."/>
            <person name="Ravasi T."/>
            <person name="Lenhard B."/>
            <person name="Wells C."/>
            <person name="Kodzius R."/>
            <person name="Shimokawa K."/>
            <person name="Bajic V.B."/>
            <person name="Brenner S.E."/>
            <person name="Batalov S."/>
            <person name="Forrest A.R."/>
            <person name="Zavolan M."/>
            <person name="Davis M.J."/>
            <person name="Wilming L.G."/>
            <person name="Aidinis V."/>
            <person name="Allen J.E."/>
            <person name="Ambesi-Impiombato A."/>
            <person name="Apweiler R."/>
            <person name="Aturaliya R.N."/>
            <person name="Bailey T.L."/>
            <person name="Bansal M."/>
            <person name="Baxter L."/>
            <person name="Beisel K.W."/>
            <person name="Bersano T."/>
            <person name="Bono H."/>
            <person name="Chalk A.M."/>
            <person name="Chiu K.P."/>
            <person name="Choudhary V."/>
            <person name="Christoffels A."/>
            <person name="Clutterbuck D.R."/>
            <person name="Crowe M.L."/>
            <person name="Dalla E."/>
            <person name="Dalrymple B.P."/>
            <person name="de Bono B."/>
            <person name="Della Gatta G."/>
            <person name="di Bernardo D."/>
            <person name="Down T."/>
            <person name="Engstrom P."/>
            <person name="Fagiolini M."/>
            <person name="Faulkner G."/>
            <person name="Fletcher C.F."/>
            <person name="Fukushima T."/>
            <person name="Furuno M."/>
            <person name="Futaki S."/>
            <person name="Gariboldi M."/>
            <person name="Georgii-Hemming P."/>
            <person name="Gingeras T.R."/>
            <person name="Gojobori T."/>
            <person name="Green R.E."/>
            <person name="Gustincich S."/>
            <person name="Harbers M."/>
            <person name="Hayashi Y."/>
            <person name="Hensch T.K."/>
            <person name="Hirokawa N."/>
            <person name="Hill D."/>
            <person name="Huminiecki L."/>
            <person name="Iacono M."/>
            <person name="Ikeo K."/>
            <person name="Iwama A."/>
            <person name="Ishikawa T."/>
            <person name="Jakt M."/>
            <person name="Kanapin A."/>
            <person name="Katoh M."/>
            <person name="Kawasawa Y."/>
            <person name="Kelso J."/>
            <person name="Kitamura H."/>
            <person name="Kitano H."/>
            <person name="Kollias G."/>
            <person name="Krishnan S.P."/>
            <person name="Kruger A."/>
            <person name="Kummerfeld S.K."/>
            <person name="Kurochkin I.V."/>
            <person name="Lareau L.F."/>
            <person name="Lazarevic D."/>
            <person name="Lipovich L."/>
            <person name="Liu J."/>
            <person name="Liuni S."/>
            <person name="McWilliam S."/>
            <person name="Madan Babu M."/>
            <person name="Madera M."/>
            <person name="Marchionni L."/>
            <person name="Matsuda H."/>
            <person name="Matsuzawa S."/>
            <person name="Miki H."/>
            <person name="Mignone F."/>
            <person name="Miyake S."/>
            <person name="Morris K."/>
            <person name="Mottagui-Tabar S."/>
            <person name="Mulder N."/>
            <person name="Nakano N."/>
            <person name="Nakauchi H."/>
            <person name="Ng P."/>
            <person name="Nilsson R."/>
            <person name="Nishiguchi S."/>
            <person name="Nishikawa S."/>
            <person name="Nori F."/>
            <person name="Ohara O."/>
            <person name="Okazaki Y."/>
            <person name="Orlando V."/>
            <person name="Pang K.C."/>
            <person name="Pavan W.J."/>
            <person name="Pavesi G."/>
            <person name="Pesole G."/>
            <person name="Petrovsky N."/>
            <person name="Piazza S."/>
            <person name="Reed J."/>
            <person name="Reid J.F."/>
            <person name="Ring B.Z."/>
            <person name="Ringwald M."/>
            <person name="Rost B."/>
            <person name="Ruan Y."/>
            <person name="Salzberg S.L."/>
            <person name="Sandelin A."/>
            <person name="Schneider C."/>
            <person name="Schoenbach C."/>
            <person name="Sekiguchi K."/>
            <person name="Semple C.A."/>
            <person name="Seno S."/>
            <person name="Sessa L."/>
            <person name="Sheng Y."/>
            <person name="Shibata Y."/>
            <person name="Shimada H."/>
            <person name="Shimada K."/>
            <person name="Silva D."/>
            <person name="Sinclair B."/>
            <person name="Sperling S."/>
            <person name="Stupka E."/>
            <person name="Sugiura K."/>
            <person name="Sultana R."/>
            <person name="Takenaka Y."/>
            <person name="Taki K."/>
            <person name="Tammoja K."/>
            <person name="Tan S.L."/>
            <person name="Tang S."/>
            <person name="Taylor M.S."/>
            <person name="Tegner J."/>
            <person name="Teichmann S.A."/>
            <person name="Ueda H.R."/>
            <person name="van Nimwegen E."/>
            <person name="Verardo R."/>
            <person name="Wei C.L."/>
            <person name="Yagi K."/>
            <person name="Yamanishi H."/>
            <person name="Zabarovsky E."/>
            <person name="Zhu S."/>
            <person name="Zimmer A."/>
            <person name="Hide W."/>
            <person name="Bult C."/>
            <person name="Grimmond S.M."/>
            <person name="Teasdale R.D."/>
            <person name="Liu E.T."/>
            <person name="Brusic V."/>
            <person name="Quackenbush J."/>
            <person name="Wahlestedt C."/>
            <person name="Mattick J.S."/>
            <person name="Hume D.A."/>
            <person name="Kai C."/>
            <person name="Sasaki D."/>
            <person name="Tomaru Y."/>
            <person name="Fukuda S."/>
            <person name="Kanamori-Katayama M."/>
            <person name="Suzuki M."/>
            <person name="Aoki J."/>
            <person name="Arakawa T."/>
            <person name="Iida J."/>
            <person name="Imamura K."/>
            <person name="Itoh M."/>
            <person name="Kato T."/>
            <person name="Kawaji H."/>
            <person name="Kawagashira N."/>
            <person name="Kawashima T."/>
            <person name="Kojima M."/>
            <person name="Kondo S."/>
            <person name="Konno H."/>
            <person name="Nakano K."/>
            <person name="Ninomiya N."/>
            <person name="Nishio T."/>
            <person name="Okada M."/>
            <person name="Plessy C."/>
            <person name="Shibata K."/>
            <person name="Shiraki T."/>
            <person name="Suzuki S."/>
            <person name="Tagami M."/>
            <person name="Waki K."/>
            <person name="Watahiki A."/>
            <person name="Okamura-Oho Y."/>
            <person name="Suzuki H."/>
            <person name="Kawai J."/>
            <person name="Hayashizaki Y."/>
        </authorList>
    </citation>
    <scope>NUCLEOTIDE SEQUENCE [LARGE SCALE MRNA] OF 13-780</scope>
    <source>
        <strain>C57BL/6J</strain>
        <tissue>Embryo</tissue>
    </source>
</reference>
<keyword id="KW-1003">Cell membrane</keyword>
<keyword id="KW-0446">Lipid-binding</keyword>
<keyword id="KW-0472">Membrane</keyword>
<keyword id="KW-1185">Reference proteome</keyword>
<keyword id="KW-0879">Wnt signaling pathway</keyword>